<evidence type="ECO:0000255" key="1">
    <source>
        <dbReference type="HAMAP-Rule" id="MF_01043"/>
    </source>
</evidence>
<evidence type="ECO:0000305" key="2"/>
<sequence length="213" mass="23369">MKLLLFITIAYLLGSIPTGLWIGQYFYHINLREHGSGNTGTTNTFRILGVKAGTATLAIDMFKGTLSILLPIIFGMTSISSIAIGFFAVLGHTFPIFANFKGGKAVATSAGVLLGFAPLYLFFLASIFVLVLYLFSMISLASVVSAIVGVLSVLTFPAIHFLLPNYDYFLTFIVILLAFIIIIRHKDNISRIKHHTENLIPWGLNLSKQVPKK</sequence>
<accession>Q1JC74</accession>
<proteinExistence type="inferred from homology"/>
<reference key="1">
    <citation type="journal article" date="2006" name="Proc. Natl. Acad. Sci. U.S.A.">
        <title>Molecular genetic anatomy of inter- and intraserotype variation in the human bacterial pathogen group A Streptococcus.</title>
        <authorList>
            <person name="Beres S.B."/>
            <person name="Richter E.W."/>
            <person name="Nagiec M.J."/>
            <person name="Sumby P."/>
            <person name="Porcella S.F."/>
            <person name="DeLeo F.R."/>
            <person name="Musser J.M."/>
        </authorList>
    </citation>
    <scope>NUCLEOTIDE SEQUENCE [LARGE SCALE GENOMIC DNA]</scope>
    <source>
        <strain>MGAS2096</strain>
    </source>
</reference>
<feature type="chain" id="PRO_0000250335" description="Glycerol-3-phosphate acyltransferase">
    <location>
        <begin position="1"/>
        <end position="213"/>
    </location>
</feature>
<feature type="transmembrane region" description="Helical" evidence="1">
    <location>
        <begin position="3"/>
        <end position="23"/>
    </location>
</feature>
<feature type="transmembrane region" description="Helical" evidence="1">
    <location>
        <begin position="68"/>
        <end position="88"/>
    </location>
</feature>
<feature type="transmembrane region" description="Helical" evidence="1">
    <location>
        <begin position="112"/>
        <end position="132"/>
    </location>
</feature>
<feature type="transmembrane region" description="Helical" evidence="1">
    <location>
        <begin position="134"/>
        <end position="154"/>
    </location>
</feature>
<feature type="transmembrane region" description="Helical" evidence="1">
    <location>
        <begin position="163"/>
        <end position="183"/>
    </location>
</feature>
<organism>
    <name type="scientific">Streptococcus pyogenes serotype M12 (strain MGAS2096)</name>
    <dbReference type="NCBI Taxonomy" id="370553"/>
    <lineage>
        <taxon>Bacteria</taxon>
        <taxon>Bacillati</taxon>
        <taxon>Bacillota</taxon>
        <taxon>Bacilli</taxon>
        <taxon>Lactobacillales</taxon>
        <taxon>Streptococcaceae</taxon>
        <taxon>Streptococcus</taxon>
    </lineage>
</organism>
<keyword id="KW-1003">Cell membrane</keyword>
<keyword id="KW-0444">Lipid biosynthesis</keyword>
<keyword id="KW-0443">Lipid metabolism</keyword>
<keyword id="KW-0472">Membrane</keyword>
<keyword id="KW-0594">Phospholipid biosynthesis</keyword>
<keyword id="KW-1208">Phospholipid metabolism</keyword>
<keyword id="KW-0808">Transferase</keyword>
<keyword id="KW-0812">Transmembrane</keyword>
<keyword id="KW-1133">Transmembrane helix</keyword>
<dbReference type="EC" id="2.3.1.275" evidence="1"/>
<dbReference type="EMBL" id="CP000261">
    <property type="protein sequence ID" value="ABF35834.1"/>
    <property type="status" value="ALT_INIT"/>
    <property type="molecule type" value="Genomic_DNA"/>
</dbReference>
<dbReference type="SMR" id="Q1JC74"/>
<dbReference type="KEGG" id="spj:MGAS2096_Spy0782"/>
<dbReference type="HOGENOM" id="CLU_081254_4_0_9"/>
<dbReference type="UniPathway" id="UPA00085"/>
<dbReference type="GO" id="GO:0005886">
    <property type="term" value="C:plasma membrane"/>
    <property type="evidence" value="ECO:0007669"/>
    <property type="project" value="UniProtKB-SubCell"/>
</dbReference>
<dbReference type="GO" id="GO:0043772">
    <property type="term" value="F:acyl-phosphate glycerol-3-phosphate acyltransferase activity"/>
    <property type="evidence" value="ECO:0007669"/>
    <property type="project" value="UniProtKB-UniRule"/>
</dbReference>
<dbReference type="GO" id="GO:0008654">
    <property type="term" value="P:phospholipid biosynthetic process"/>
    <property type="evidence" value="ECO:0007669"/>
    <property type="project" value="UniProtKB-UniRule"/>
</dbReference>
<dbReference type="HAMAP" id="MF_01043">
    <property type="entry name" value="PlsY"/>
    <property type="match status" value="1"/>
</dbReference>
<dbReference type="InterPro" id="IPR003811">
    <property type="entry name" value="G3P_acylTferase_PlsY"/>
</dbReference>
<dbReference type="NCBIfam" id="TIGR00023">
    <property type="entry name" value="glycerol-3-phosphate 1-O-acyltransferase PlsY"/>
    <property type="match status" value="1"/>
</dbReference>
<dbReference type="PANTHER" id="PTHR30309:SF0">
    <property type="entry name" value="GLYCEROL-3-PHOSPHATE ACYLTRANSFERASE-RELATED"/>
    <property type="match status" value="1"/>
</dbReference>
<dbReference type="PANTHER" id="PTHR30309">
    <property type="entry name" value="INNER MEMBRANE PROTEIN YGIH"/>
    <property type="match status" value="1"/>
</dbReference>
<dbReference type="Pfam" id="PF02660">
    <property type="entry name" value="G3P_acyltransf"/>
    <property type="match status" value="1"/>
</dbReference>
<dbReference type="SMART" id="SM01207">
    <property type="entry name" value="G3P_acyltransf"/>
    <property type="match status" value="1"/>
</dbReference>
<protein>
    <recommendedName>
        <fullName evidence="1">Glycerol-3-phosphate acyltransferase</fullName>
    </recommendedName>
    <alternativeName>
        <fullName evidence="1">Acyl-PO4 G3P acyltransferase</fullName>
    </alternativeName>
    <alternativeName>
        <fullName evidence="1">Acyl-phosphate--glycerol-3-phosphate acyltransferase</fullName>
    </alternativeName>
    <alternativeName>
        <fullName evidence="1">G3P acyltransferase</fullName>
        <shortName evidence="1">GPAT</shortName>
        <ecNumber evidence="1">2.3.1.275</ecNumber>
    </alternativeName>
    <alternativeName>
        <fullName evidence="1">Lysophosphatidic acid synthase</fullName>
        <shortName evidence="1">LPA synthase</shortName>
    </alternativeName>
</protein>
<name>PLSY_STRPB</name>
<comment type="function">
    <text evidence="1">Catalyzes the transfer of an acyl group from acyl-phosphate (acyl-PO(4)) to glycerol-3-phosphate (G3P) to form lysophosphatidic acid (LPA). This enzyme utilizes acyl-phosphate as fatty acyl donor, but not acyl-CoA or acyl-ACP.</text>
</comment>
<comment type="catalytic activity">
    <reaction evidence="1">
        <text>an acyl phosphate + sn-glycerol 3-phosphate = a 1-acyl-sn-glycero-3-phosphate + phosphate</text>
        <dbReference type="Rhea" id="RHEA:34075"/>
        <dbReference type="ChEBI" id="CHEBI:43474"/>
        <dbReference type="ChEBI" id="CHEBI:57597"/>
        <dbReference type="ChEBI" id="CHEBI:57970"/>
        <dbReference type="ChEBI" id="CHEBI:59918"/>
        <dbReference type="EC" id="2.3.1.275"/>
    </reaction>
</comment>
<comment type="pathway">
    <text evidence="1">Lipid metabolism; phospholipid metabolism.</text>
</comment>
<comment type="subunit">
    <text evidence="1">Probably interacts with PlsX.</text>
</comment>
<comment type="subcellular location">
    <subcellularLocation>
        <location evidence="1">Cell membrane</location>
        <topology evidence="1">Multi-pass membrane protein</topology>
    </subcellularLocation>
</comment>
<comment type="similarity">
    <text evidence="1">Belongs to the PlsY family.</text>
</comment>
<comment type="sequence caution" evidence="2">
    <conflict type="erroneous initiation">
        <sequence resource="EMBL-CDS" id="ABF35834"/>
    </conflict>
</comment>
<gene>
    <name evidence="1" type="primary">plsY</name>
    <name type="ordered locus">MGAS2096_Spy0782</name>
</gene>